<keyword id="KW-0186">Copper</keyword>
<keyword id="KW-0249">Electron transport</keyword>
<keyword id="KW-0460">Magnesium</keyword>
<keyword id="KW-0472">Membrane</keyword>
<keyword id="KW-0479">Metal-binding</keyword>
<keyword id="KW-0496">Mitochondrion</keyword>
<keyword id="KW-0999">Mitochondrion inner membrane</keyword>
<keyword id="KW-1185">Reference proteome</keyword>
<keyword id="KW-0679">Respiratory chain</keyword>
<keyword id="KW-0732">Signal</keyword>
<keyword id="KW-1278">Translocase</keyword>
<keyword id="KW-0812">Transmembrane</keyword>
<keyword id="KW-1133">Transmembrane helix</keyword>
<keyword id="KW-0813">Transport</keyword>
<sequence length="248" mass="28676">MLLMNLFTIINNDVPTPYNMYFQDSTTPHQEGILELHDNIMFYMLTVLGLVSWMMIIIIKDYKNNPITYKYIKHGQMIEIIWTILPAIILLMIAFPSFILLYLCDEVISPAMTIKVIGLQWYWKYEYSDFINDNGETIEYESYMIPEELLEEGQLRMLDTDTSIVIPVDTHVRFIVTATDVIHDFAVPSLGIKIDTTPGRLSQVSTLIQREGIFYGQCSELCGAQHSAMPIKIETVKLPTFLTWLNEQ</sequence>
<reference key="1">
    <citation type="journal article" date="2004" name="Science">
        <title>The Ashbya gossypii genome as a tool for mapping the ancient Saccharomyces cerevisiae genome.</title>
        <authorList>
            <person name="Dietrich F.S."/>
            <person name="Voegeli S."/>
            <person name="Brachat S."/>
            <person name="Lerch A."/>
            <person name="Gates K."/>
            <person name="Steiner S."/>
            <person name="Mohr C."/>
            <person name="Poehlmann R."/>
            <person name="Luedi P."/>
            <person name="Choi S."/>
            <person name="Wing R.A."/>
            <person name="Flavier A."/>
            <person name="Gaffney T.D."/>
            <person name="Philippsen P."/>
        </authorList>
    </citation>
    <scope>NUCLEOTIDE SEQUENCE [LARGE SCALE GENOMIC DNA]</scope>
    <source>
        <strain>ATCC 10895 / CBS 109.51 / FGSC 9923 / NRRL Y-1056</strain>
    </source>
</reference>
<reference key="2">
    <citation type="journal article" date="2013" name="G3 (Bethesda)">
        <title>Genomes of Ashbya fungi isolated from insects reveal four mating-type loci, numerous translocations, lack of transposons, and distinct gene duplications.</title>
        <authorList>
            <person name="Dietrich F.S."/>
            <person name="Voegeli S."/>
            <person name="Kuo S."/>
            <person name="Philippsen P."/>
        </authorList>
    </citation>
    <scope>GENOME REANNOTATION</scope>
    <source>
        <strain>ATCC 10895 / CBS 109.51 / FGSC 9923 / NRRL Y-1056</strain>
    </source>
</reference>
<reference key="3">
    <citation type="journal article" date="2003" name="FEMS Yeast Res.">
        <title>Phylogenetic relationships among yeasts of the 'Saccharomyces complex' determined from multigene sequence analyses.</title>
        <authorList>
            <person name="Kurtzman C.P."/>
            <person name="Robnett C.J."/>
        </authorList>
    </citation>
    <scope>NUCLEOTIDE SEQUENCE [GENOMIC DNA] OF 39-233</scope>
    <source>
        <strain>ATCC 10895 / CBS 109.51 / FGSC 9923 / NRRL Y-1056</strain>
    </source>
</reference>
<accession>Q7YFV7</accession>
<accession>Q75G36</accession>
<comment type="function">
    <text evidence="2">Component of the cytochrome c oxidase, the last enzyme in the mitochondrial electron transport chain which drives oxidative phosphorylation. The respiratory chain contains 3 multisubunit complexes succinate dehydrogenase (complex II, CII), ubiquinol-cytochrome c oxidoreductase (cytochrome b-c1 complex, complex III, CIII) and cytochrome c oxidase (complex IV, CIV), that cooperate to transfer electrons derived from NADH and succinate to molecular oxygen, creating an electrochemical gradient over the inner membrane that drives transmembrane transport and the ATP synthase. Cytochrome c oxidase is the component of the respiratory chain that catalyzes the reduction of oxygen to water. Electrons originating from reduced cytochrome c in the intermembrane space (IMS) are transferred via the dinuclear copper A center (CU(A)) of subunit 2 and heme A of subunit 1 to the active site in subunit 1, a binuclear center (BNC) formed by heme A3 and copper B (CU(B)). The BNC reduces molecular oxygen to 2 water molecules using 4 electrons from cytochrome c in the IMS and 4 protons from the mitochondrial matrix.</text>
</comment>
<comment type="catalytic activity">
    <reaction evidence="2">
        <text>4 Fe(II)-[cytochrome c] + O2 + 8 H(+)(in) = 4 Fe(III)-[cytochrome c] + 2 H2O + 4 H(+)(out)</text>
        <dbReference type="Rhea" id="RHEA:11436"/>
        <dbReference type="Rhea" id="RHEA-COMP:10350"/>
        <dbReference type="Rhea" id="RHEA-COMP:14399"/>
        <dbReference type="ChEBI" id="CHEBI:15377"/>
        <dbReference type="ChEBI" id="CHEBI:15378"/>
        <dbReference type="ChEBI" id="CHEBI:15379"/>
        <dbReference type="ChEBI" id="CHEBI:29033"/>
        <dbReference type="ChEBI" id="CHEBI:29034"/>
        <dbReference type="EC" id="7.1.1.9"/>
    </reaction>
    <physiologicalReaction direction="left-to-right" evidence="2">
        <dbReference type="Rhea" id="RHEA:11437"/>
    </physiologicalReaction>
</comment>
<comment type="cofactor">
    <cofactor evidence="2">
        <name>Cu cation</name>
        <dbReference type="ChEBI" id="CHEBI:23378"/>
    </cofactor>
    <text evidence="2">Binds a dinuclear copper A center per subunit.</text>
</comment>
<comment type="subunit">
    <text evidence="2">Component of the cytochrome c oxidase (complex IV, CIV), a multisubunit enzyme composed of a catalytic core of 3 subunits and several supernumerary subunits. The complex exists as a monomer or a dimer and forms supercomplexes (SCs) in the inner mitochondrial membrane with ubiquinol-cytochrome c oxidoreductase (cytochrome b-c1 complex, complex III, CIII).</text>
</comment>
<comment type="subcellular location">
    <subcellularLocation>
        <location evidence="2">Mitochondrion inner membrane</location>
        <topology evidence="2">Multi-pass membrane protein</topology>
    </subcellularLocation>
</comment>
<comment type="PTM">
    <text evidence="1">The signal sequence of COX2 is processed by IMP1.</text>
</comment>
<comment type="similarity">
    <text evidence="4">Belongs to the cytochrome c oxidase subunit 2 family.</text>
</comment>
<dbReference type="EC" id="7.1.1.9"/>
<dbReference type="EMBL" id="AE016821">
    <property type="protein sequence ID" value="AAS50168.1"/>
    <property type="molecule type" value="Genomic_DNA"/>
</dbReference>
<dbReference type="EMBL" id="AF442273">
    <property type="protein sequence ID" value="AAP57840.1"/>
    <property type="molecule type" value="Genomic_DNA"/>
</dbReference>
<dbReference type="RefSeq" id="NP_987078.1">
    <property type="nucleotide sequence ID" value="NC_005789.1"/>
</dbReference>
<dbReference type="SMR" id="Q7YFV7"/>
<dbReference type="FunCoup" id="Q7YFV7">
    <property type="interactions" value="231"/>
</dbReference>
<dbReference type="STRING" id="284811.Q7YFV7"/>
<dbReference type="EnsemblFungi" id="AAS50168">
    <property type="protein sequence ID" value="AAS50168"/>
    <property type="gene ID" value="AGOS_AMI001W"/>
</dbReference>
<dbReference type="GeneID" id="2760769"/>
<dbReference type="KEGG" id="ago:AGOS_AMI001W"/>
<dbReference type="eggNOG" id="KOG4767">
    <property type="taxonomic scope" value="Eukaryota"/>
</dbReference>
<dbReference type="HOGENOM" id="CLU_036876_2_3_1"/>
<dbReference type="InParanoid" id="Q7YFV7"/>
<dbReference type="OMA" id="WSYEYTD"/>
<dbReference type="OrthoDB" id="539285at2759"/>
<dbReference type="Proteomes" id="UP000000591">
    <property type="component" value="Mitochondrion"/>
</dbReference>
<dbReference type="GO" id="GO:0005743">
    <property type="term" value="C:mitochondrial inner membrane"/>
    <property type="evidence" value="ECO:0007669"/>
    <property type="project" value="UniProtKB-SubCell"/>
</dbReference>
<dbReference type="GO" id="GO:0045277">
    <property type="term" value="C:respiratory chain complex IV"/>
    <property type="evidence" value="ECO:0007669"/>
    <property type="project" value="EnsemblFungi"/>
</dbReference>
<dbReference type="GO" id="GO:0005507">
    <property type="term" value="F:copper ion binding"/>
    <property type="evidence" value="ECO:0007669"/>
    <property type="project" value="InterPro"/>
</dbReference>
<dbReference type="GO" id="GO:0004129">
    <property type="term" value="F:cytochrome-c oxidase activity"/>
    <property type="evidence" value="ECO:0007669"/>
    <property type="project" value="UniProtKB-EC"/>
</dbReference>
<dbReference type="GO" id="GO:0042773">
    <property type="term" value="P:ATP synthesis coupled electron transport"/>
    <property type="evidence" value="ECO:0000318"/>
    <property type="project" value="GO_Central"/>
</dbReference>
<dbReference type="GO" id="GO:0006123">
    <property type="term" value="P:mitochondrial electron transport, cytochrome c to oxygen"/>
    <property type="evidence" value="ECO:0007669"/>
    <property type="project" value="EnsemblFungi"/>
</dbReference>
<dbReference type="CDD" id="cd13912">
    <property type="entry name" value="CcO_II_C"/>
    <property type="match status" value="1"/>
</dbReference>
<dbReference type="FunFam" id="1.10.287.90:FF:000004">
    <property type="entry name" value="Cytochrome c oxidase subunit 2"/>
    <property type="match status" value="1"/>
</dbReference>
<dbReference type="FunFam" id="2.60.40.420:FF:000001">
    <property type="entry name" value="Cytochrome c oxidase subunit 2"/>
    <property type="match status" value="1"/>
</dbReference>
<dbReference type="Gene3D" id="1.10.287.90">
    <property type="match status" value="1"/>
</dbReference>
<dbReference type="Gene3D" id="2.60.40.420">
    <property type="entry name" value="Cupredoxins - blue copper proteins"/>
    <property type="match status" value="1"/>
</dbReference>
<dbReference type="InterPro" id="IPR045187">
    <property type="entry name" value="CcO_II"/>
</dbReference>
<dbReference type="InterPro" id="IPR002429">
    <property type="entry name" value="CcO_II-like_C"/>
</dbReference>
<dbReference type="InterPro" id="IPR034210">
    <property type="entry name" value="CcO_II_C"/>
</dbReference>
<dbReference type="InterPro" id="IPR001505">
    <property type="entry name" value="Copper_CuA"/>
</dbReference>
<dbReference type="InterPro" id="IPR008972">
    <property type="entry name" value="Cupredoxin"/>
</dbReference>
<dbReference type="InterPro" id="IPR014222">
    <property type="entry name" value="Cyt_c_oxidase_su2"/>
</dbReference>
<dbReference type="InterPro" id="IPR011759">
    <property type="entry name" value="Cyt_c_oxidase_su2_TM_dom"/>
</dbReference>
<dbReference type="InterPro" id="IPR036257">
    <property type="entry name" value="Cyt_c_oxidase_su2_TM_sf"/>
</dbReference>
<dbReference type="NCBIfam" id="TIGR02866">
    <property type="entry name" value="CoxB"/>
    <property type="match status" value="1"/>
</dbReference>
<dbReference type="PANTHER" id="PTHR22888:SF9">
    <property type="entry name" value="CYTOCHROME C OXIDASE SUBUNIT 2"/>
    <property type="match status" value="1"/>
</dbReference>
<dbReference type="PANTHER" id="PTHR22888">
    <property type="entry name" value="CYTOCHROME C OXIDASE, SUBUNIT II"/>
    <property type="match status" value="1"/>
</dbReference>
<dbReference type="Pfam" id="PF00116">
    <property type="entry name" value="COX2"/>
    <property type="match status" value="1"/>
</dbReference>
<dbReference type="Pfam" id="PF02790">
    <property type="entry name" value="COX2_TM"/>
    <property type="match status" value="1"/>
</dbReference>
<dbReference type="PRINTS" id="PR01166">
    <property type="entry name" value="CYCOXIDASEII"/>
</dbReference>
<dbReference type="SUPFAM" id="SSF49503">
    <property type="entry name" value="Cupredoxins"/>
    <property type="match status" value="1"/>
</dbReference>
<dbReference type="SUPFAM" id="SSF81464">
    <property type="entry name" value="Cytochrome c oxidase subunit II-like, transmembrane region"/>
    <property type="match status" value="1"/>
</dbReference>
<dbReference type="PROSITE" id="PS00078">
    <property type="entry name" value="COX2"/>
    <property type="match status" value="1"/>
</dbReference>
<dbReference type="PROSITE" id="PS50857">
    <property type="entry name" value="COX2_CUA"/>
    <property type="match status" value="1"/>
</dbReference>
<dbReference type="PROSITE" id="PS50999">
    <property type="entry name" value="COX2_TM"/>
    <property type="match status" value="1"/>
</dbReference>
<name>COX2_EREGS</name>
<protein>
    <recommendedName>
        <fullName>Cytochrome c oxidase subunit 2</fullName>
        <ecNumber>7.1.1.9</ecNumber>
    </recommendedName>
    <alternativeName>
        <fullName>Cytochrome c oxidase polypeptide II</fullName>
    </alternativeName>
</protein>
<organism>
    <name type="scientific">Eremothecium gossypii (strain ATCC 10895 / CBS 109.51 / FGSC 9923 / NRRL Y-1056)</name>
    <name type="common">Yeast</name>
    <name type="synonym">Ashbya gossypii</name>
    <dbReference type="NCBI Taxonomy" id="284811"/>
    <lineage>
        <taxon>Eukaryota</taxon>
        <taxon>Fungi</taxon>
        <taxon>Dikarya</taxon>
        <taxon>Ascomycota</taxon>
        <taxon>Saccharomycotina</taxon>
        <taxon>Saccharomycetes</taxon>
        <taxon>Saccharomycetales</taxon>
        <taxon>Saccharomycetaceae</taxon>
        <taxon>Eremothecium</taxon>
    </lineage>
</organism>
<proteinExistence type="inferred from homology"/>
<feature type="signal peptide" evidence="1">
    <location>
        <begin position="1"/>
        <end position="12"/>
    </location>
</feature>
<feature type="chain" id="PRO_0000006037" description="Cytochrome c oxidase subunit 2">
    <location>
        <begin position="13"/>
        <end position="248"/>
    </location>
</feature>
<feature type="topological domain" description="Mitochondrial intermembrane" evidence="3">
    <location>
        <begin position="13"/>
        <end position="39"/>
    </location>
</feature>
<feature type="transmembrane region" description="Helical" evidence="3">
    <location>
        <begin position="40"/>
        <end position="61"/>
    </location>
</feature>
<feature type="topological domain" description="Mitochondrial matrix" evidence="3">
    <location>
        <begin position="62"/>
        <end position="79"/>
    </location>
</feature>
<feature type="transmembrane region" description="Helical" evidence="3">
    <location>
        <begin position="80"/>
        <end position="104"/>
    </location>
</feature>
<feature type="topological domain" description="Mitochondrial intermembrane" evidence="3">
    <location>
        <begin position="105"/>
        <end position="248"/>
    </location>
</feature>
<feature type="binding site" evidence="2">
    <location>
        <position position="183"/>
    </location>
    <ligand>
        <name>Cu cation</name>
        <dbReference type="ChEBI" id="CHEBI:23378"/>
        <label>A1</label>
    </ligand>
</feature>
<feature type="binding site" evidence="2">
    <location>
        <position position="218"/>
    </location>
    <ligand>
        <name>Cu cation</name>
        <dbReference type="ChEBI" id="CHEBI:23378"/>
        <label>A1</label>
    </ligand>
</feature>
<feature type="binding site" evidence="2">
    <location>
        <position position="218"/>
    </location>
    <ligand>
        <name>Cu cation</name>
        <dbReference type="ChEBI" id="CHEBI:23378"/>
        <label>A2</label>
    </ligand>
</feature>
<feature type="binding site" evidence="2">
    <location>
        <position position="220"/>
    </location>
    <ligand>
        <name>Cu cation</name>
        <dbReference type="ChEBI" id="CHEBI:23378"/>
        <label>A2</label>
    </ligand>
</feature>
<feature type="binding site" evidence="2">
    <location>
        <position position="220"/>
    </location>
    <ligand>
        <name>Mg(2+)</name>
        <dbReference type="ChEBI" id="CHEBI:18420"/>
        <note>ligand shared with subunit 1</note>
    </ligand>
</feature>
<feature type="binding site" evidence="2">
    <location>
        <position position="222"/>
    </location>
    <ligand>
        <name>Cu cation</name>
        <dbReference type="ChEBI" id="CHEBI:23378"/>
        <label>A1</label>
    </ligand>
</feature>
<feature type="binding site" evidence="2">
    <location>
        <position position="222"/>
    </location>
    <ligand>
        <name>Cu cation</name>
        <dbReference type="ChEBI" id="CHEBI:23378"/>
        <label>A2</label>
    </ligand>
</feature>
<feature type="binding site" evidence="2">
    <location>
        <position position="226"/>
    </location>
    <ligand>
        <name>Cu cation</name>
        <dbReference type="ChEBI" id="CHEBI:23378"/>
        <label>A2</label>
    </ligand>
</feature>
<feature type="binding site" evidence="2">
    <location>
        <position position="229"/>
    </location>
    <ligand>
        <name>Cu cation</name>
        <dbReference type="ChEBI" id="CHEBI:23378"/>
        <label>A1</label>
    </ligand>
</feature>
<geneLocation type="mitochondrion"/>
<evidence type="ECO:0000250" key="1"/>
<evidence type="ECO:0000250" key="2">
    <source>
        <dbReference type="UniProtKB" id="P00410"/>
    </source>
</evidence>
<evidence type="ECO:0000255" key="3"/>
<evidence type="ECO:0000305" key="4"/>
<gene>
    <name type="primary">COX2</name>
    <name type="synonym">CoxII</name>
    <name type="ordered locus">AMI001W</name>
    <name type="ORF">AgCOX2</name>
</gene>